<evidence type="ECO:0000255" key="1">
    <source>
        <dbReference type="HAMAP-Rule" id="MF_00528"/>
    </source>
</evidence>
<gene>
    <name type="ordered locus">XfasM23_0408</name>
</gene>
<reference key="1">
    <citation type="journal article" date="2010" name="J. Bacteriol.">
        <title>Whole genome sequences of two Xylella fastidiosa strains (M12 and M23) causing almond leaf scorch disease in California.</title>
        <authorList>
            <person name="Chen J."/>
            <person name="Xie G."/>
            <person name="Han S."/>
            <person name="Chertkov O."/>
            <person name="Sims D."/>
            <person name="Civerolo E.L."/>
        </authorList>
    </citation>
    <scope>NUCLEOTIDE SEQUENCE [LARGE SCALE GENOMIC DNA]</scope>
    <source>
        <strain>M23</strain>
    </source>
</reference>
<dbReference type="EC" id="3.6.1.9" evidence="1"/>
<dbReference type="EMBL" id="CP001011">
    <property type="protein sequence ID" value="ACB91856.1"/>
    <property type="molecule type" value="Genomic_DNA"/>
</dbReference>
<dbReference type="RefSeq" id="WP_004090041.1">
    <property type="nucleotide sequence ID" value="NC_010577.1"/>
</dbReference>
<dbReference type="SMR" id="B2I858"/>
<dbReference type="KEGG" id="xfn:XfasM23_0408"/>
<dbReference type="HOGENOM" id="CLU_040416_2_1_6"/>
<dbReference type="Proteomes" id="UP000001698">
    <property type="component" value="Chromosome"/>
</dbReference>
<dbReference type="GO" id="GO:0005737">
    <property type="term" value="C:cytoplasm"/>
    <property type="evidence" value="ECO:0007669"/>
    <property type="project" value="UniProtKB-SubCell"/>
</dbReference>
<dbReference type="GO" id="GO:0047429">
    <property type="term" value="F:nucleoside triphosphate diphosphatase activity"/>
    <property type="evidence" value="ECO:0007669"/>
    <property type="project" value="UniProtKB-EC"/>
</dbReference>
<dbReference type="GO" id="GO:0009117">
    <property type="term" value="P:nucleotide metabolic process"/>
    <property type="evidence" value="ECO:0007669"/>
    <property type="project" value="UniProtKB-KW"/>
</dbReference>
<dbReference type="CDD" id="cd00555">
    <property type="entry name" value="Maf"/>
    <property type="match status" value="1"/>
</dbReference>
<dbReference type="Gene3D" id="3.90.950.10">
    <property type="match status" value="1"/>
</dbReference>
<dbReference type="HAMAP" id="MF_00528">
    <property type="entry name" value="Maf"/>
    <property type="match status" value="1"/>
</dbReference>
<dbReference type="InterPro" id="IPR029001">
    <property type="entry name" value="ITPase-like_fam"/>
</dbReference>
<dbReference type="InterPro" id="IPR003697">
    <property type="entry name" value="Maf-like"/>
</dbReference>
<dbReference type="NCBIfam" id="TIGR00172">
    <property type="entry name" value="maf"/>
    <property type="match status" value="1"/>
</dbReference>
<dbReference type="NCBIfam" id="NF003403">
    <property type="entry name" value="PRK04694.1"/>
    <property type="match status" value="1"/>
</dbReference>
<dbReference type="PANTHER" id="PTHR43213">
    <property type="entry name" value="BIFUNCTIONAL DTTP/UTP PYROPHOSPHATASE/METHYLTRANSFERASE PROTEIN-RELATED"/>
    <property type="match status" value="1"/>
</dbReference>
<dbReference type="PANTHER" id="PTHR43213:SF5">
    <property type="entry name" value="BIFUNCTIONAL DTTP_UTP PYROPHOSPHATASE_METHYLTRANSFERASE PROTEIN-RELATED"/>
    <property type="match status" value="1"/>
</dbReference>
<dbReference type="Pfam" id="PF02545">
    <property type="entry name" value="Maf"/>
    <property type="match status" value="1"/>
</dbReference>
<dbReference type="PIRSF" id="PIRSF006305">
    <property type="entry name" value="Maf"/>
    <property type="match status" value="1"/>
</dbReference>
<dbReference type="SUPFAM" id="SSF52972">
    <property type="entry name" value="ITPase-like"/>
    <property type="match status" value="1"/>
</dbReference>
<sequence>MLYLASRSLCRRQLLQRLDIPFQVIDLEIPEVRREDELPQDYVRRVAQEKAQVGLARVGDAFAPKVLGADTEVVLDGRVFGKPVDLAEAATMLAALSGRTHQVMTAVSLVAAGGVAAQVLVVSEVSFALLSQGQIARYVDSGEPMGKAGAYAIQGRGECFVSRLVGSYSGVMGLPLQQTAQLLATFEES</sequence>
<feature type="chain" id="PRO_1000127804" description="Nucleoside triphosphate pyrophosphatase">
    <location>
        <begin position="1"/>
        <end position="189"/>
    </location>
</feature>
<feature type="active site" description="Proton acceptor" evidence="1">
    <location>
        <position position="70"/>
    </location>
</feature>
<name>NTPP_XYLF2</name>
<proteinExistence type="inferred from homology"/>
<accession>B2I858</accession>
<organism>
    <name type="scientific">Xylella fastidiosa (strain M23)</name>
    <dbReference type="NCBI Taxonomy" id="405441"/>
    <lineage>
        <taxon>Bacteria</taxon>
        <taxon>Pseudomonadati</taxon>
        <taxon>Pseudomonadota</taxon>
        <taxon>Gammaproteobacteria</taxon>
        <taxon>Lysobacterales</taxon>
        <taxon>Lysobacteraceae</taxon>
        <taxon>Xylella</taxon>
    </lineage>
</organism>
<comment type="function">
    <text evidence="1">Nucleoside triphosphate pyrophosphatase. May have a dual role in cell division arrest and in preventing the incorporation of modified nucleotides into cellular nucleic acids.</text>
</comment>
<comment type="catalytic activity">
    <reaction evidence="1">
        <text>a ribonucleoside 5'-triphosphate + H2O = a ribonucleoside 5'-phosphate + diphosphate + H(+)</text>
        <dbReference type="Rhea" id="RHEA:23996"/>
        <dbReference type="ChEBI" id="CHEBI:15377"/>
        <dbReference type="ChEBI" id="CHEBI:15378"/>
        <dbReference type="ChEBI" id="CHEBI:33019"/>
        <dbReference type="ChEBI" id="CHEBI:58043"/>
        <dbReference type="ChEBI" id="CHEBI:61557"/>
        <dbReference type="EC" id="3.6.1.9"/>
    </reaction>
</comment>
<comment type="catalytic activity">
    <reaction evidence="1">
        <text>a 2'-deoxyribonucleoside 5'-triphosphate + H2O = a 2'-deoxyribonucleoside 5'-phosphate + diphosphate + H(+)</text>
        <dbReference type="Rhea" id="RHEA:44644"/>
        <dbReference type="ChEBI" id="CHEBI:15377"/>
        <dbReference type="ChEBI" id="CHEBI:15378"/>
        <dbReference type="ChEBI" id="CHEBI:33019"/>
        <dbReference type="ChEBI" id="CHEBI:61560"/>
        <dbReference type="ChEBI" id="CHEBI:65317"/>
        <dbReference type="EC" id="3.6.1.9"/>
    </reaction>
</comment>
<comment type="cofactor">
    <cofactor evidence="1">
        <name>a divalent metal cation</name>
        <dbReference type="ChEBI" id="CHEBI:60240"/>
    </cofactor>
</comment>
<comment type="subcellular location">
    <subcellularLocation>
        <location evidence="1">Cytoplasm</location>
    </subcellularLocation>
</comment>
<comment type="similarity">
    <text evidence="1">Belongs to the Maf family.</text>
</comment>
<keyword id="KW-0963">Cytoplasm</keyword>
<keyword id="KW-0378">Hydrolase</keyword>
<keyword id="KW-0546">Nucleotide metabolism</keyword>
<protein>
    <recommendedName>
        <fullName evidence="1">Nucleoside triphosphate pyrophosphatase</fullName>
        <ecNumber evidence="1">3.6.1.9</ecNumber>
    </recommendedName>
    <alternativeName>
        <fullName evidence="1">Nucleotide pyrophosphatase</fullName>
        <shortName evidence="1">Nucleotide PPase</shortName>
    </alternativeName>
</protein>